<keyword id="KW-0119">Carbohydrate metabolism</keyword>
<keyword id="KW-0413">Isomerase</keyword>
<proteinExistence type="inferred from homology"/>
<name>NANE_STRP6</name>
<feature type="chain" id="PRO_0000179811" description="Putative N-acetylmannosamine-6-phosphate 2-epimerase">
    <location>
        <begin position="1"/>
        <end position="234"/>
    </location>
</feature>
<reference key="1">
    <citation type="journal article" date="2004" name="J. Infect. Dis.">
        <title>Progress toward characterization of the group A Streptococcus metagenome: complete genome sequence of a macrolide-resistant serotype M6 strain.</title>
        <authorList>
            <person name="Banks D.J."/>
            <person name="Porcella S.F."/>
            <person name="Barbian K.D."/>
            <person name="Beres S.B."/>
            <person name="Philips L.E."/>
            <person name="Voyich J.M."/>
            <person name="DeLeo F.R."/>
            <person name="Martin J.M."/>
            <person name="Somerville G.A."/>
            <person name="Musser J.M."/>
        </authorList>
    </citation>
    <scope>NUCLEOTIDE SEQUENCE [LARGE SCALE GENOMIC DNA]</scope>
    <source>
        <strain>ATCC BAA-946 / MGAS10394</strain>
    </source>
</reference>
<accession>Q5XDY5</accession>
<comment type="function">
    <text evidence="1">Converts N-acetylmannosamine-6-phosphate (ManNAc-6-P) to N-acetylglucosamine-6-phosphate (GlcNAc-6-P).</text>
</comment>
<comment type="catalytic activity">
    <reaction evidence="1">
        <text>an N-acyl-D-glucosamine 6-phosphate = an N-acyl-D-mannosamine 6-phosphate</text>
        <dbReference type="Rhea" id="RHEA:23932"/>
        <dbReference type="ChEBI" id="CHEBI:57599"/>
        <dbReference type="ChEBI" id="CHEBI:57666"/>
        <dbReference type="EC" id="5.1.3.9"/>
    </reaction>
</comment>
<comment type="pathway">
    <text evidence="1">Amino-sugar metabolism; N-acetylneuraminate degradation; D-fructose 6-phosphate from N-acetylneuraminate: step 3/5.</text>
</comment>
<comment type="similarity">
    <text evidence="1">Belongs to the NanE family.</text>
</comment>
<organism>
    <name type="scientific">Streptococcus pyogenes serotype M6 (strain ATCC BAA-946 / MGAS10394)</name>
    <dbReference type="NCBI Taxonomy" id="286636"/>
    <lineage>
        <taxon>Bacteria</taxon>
        <taxon>Bacillati</taxon>
        <taxon>Bacillota</taxon>
        <taxon>Bacilli</taxon>
        <taxon>Lactobacillales</taxon>
        <taxon>Streptococcaceae</taxon>
        <taxon>Streptococcus</taxon>
    </lineage>
</organism>
<dbReference type="EC" id="5.1.3.9" evidence="1"/>
<dbReference type="EMBL" id="CP000003">
    <property type="protein sequence ID" value="AAT86378.1"/>
    <property type="molecule type" value="Genomic_DNA"/>
</dbReference>
<dbReference type="RefSeq" id="WP_011184150.1">
    <property type="nucleotide sequence ID" value="NC_006086.1"/>
</dbReference>
<dbReference type="SMR" id="Q5XDY5"/>
<dbReference type="KEGG" id="spa:M6_Spy0243"/>
<dbReference type="HOGENOM" id="CLU_086300_1_0_9"/>
<dbReference type="UniPathway" id="UPA00629">
    <property type="reaction ID" value="UER00682"/>
</dbReference>
<dbReference type="Proteomes" id="UP000001167">
    <property type="component" value="Chromosome"/>
</dbReference>
<dbReference type="GO" id="GO:0005829">
    <property type="term" value="C:cytosol"/>
    <property type="evidence" value="ECO:0007669"/>
    <property type="project" value="TreeGrafter"/>
</dbReference>
<dbReference type="GO" id="GO:0047465">
    <property type="term" value="F:N-acylglucosamine-6-phosphate 2-epimerase activity"/>
    <property type="evidence" value="ECO:0007669"/>
    <property type="project" value="UniProtKB-EC"/>
</dbReference>
<dbReference type="GO" id="GO:0005975">
    <property type="term" value="P:carbohydrate metabolic process"/>
    <property type="evidence" value="ECO:0007669"/>
    <property type="project" value="UniProtKB-UniRule"/>
</dbReference>
<dbReference type="GO" id="GO:0006053">
    <property type="term" value="P:N-acetylmannosamine catabolic process"/>
    <property type="evidence" value="ECO:0007669"/>
    <property type="project" value="TreeGrafter"/>
</dbReference>
<dbReference type="GO" id="GO:0019262">
    <property type="term" value="P:N-acetylneuraminate catabolic process"/>
    <property type="evidence" value="ECO:0007669"/>
    <property type="project" value="UniProtKB-UniRule"/>
</dbReference>
<dbReference type="CDD" id="cd04729">
    <property type="entry name" value="NanE"/>
    <property type="match status" value="1"/>
</dbReference>
<dbReference type="FunFam" id="3.20.20.70:FF:000035">
    <property type="entry name" value="Putative N-acetylmannosamine-6-phosphate 2-epimerase"/>
    <property type="match status" value="1"/>
</dbReference>
<dbReference type="Gene3D" id="3.20.20.70">
    <property type="entry name" value="Aldolase class I"/>
    <property type="match status" value="1"/>
</dbReference>
<dbReference type="HAMAP" id="MF_01235">
    <property type="entry name" value="ManNAc6P_epimer"/>
    <property type="match status" value="1"/>
</dbReference>
<dbReference type="InterPro" id="IPR013785">
    <property type="entry name" value="Aldolase_TIM"/>
</dbReference>
<dbReference type="InterPro" id="IPR007260">
    <property type="entry name" value="NanE"/>
</dbReference>
<dbReference type="InterPro" id="IPR011060">
    <property type="entry name" value="RibuloseP-bd_barrel"/>
</dbReference>
<dbReference type="NCBIfam" id="NF002231">
    <property type="entry name" value="PRK01130.1"/>
    <property type="match status" value="1"/>
</dbReference>
<dbReference type="PANTHER" id="PTHR36204">
    <property type="entry name" value="N-ACETYLMANNOSAMINE-6-PHOSPHATE 2-EPIMERASE-RELATED"/>
    <property type="match status" value="1"/>
</dbReference>
<dbReference type="PANTHER" id="PTHR36204:SF1">
    <property type="entry name" value="N-ACETYLMANNOSAMINE-6-PHOSPHATE 2-EPIMERASE-RELATED"/>
    <property type="match status" value="1"/>
</dbReference>
<dbReference type="Pfam" id="PF04131">
    <property type="entry name" value="NanE"/>
    <property type="match status" value="1"/>
</dbReference>
<dbReference type="SUPFAM" id="SSF51366">
    <property type="entry name" value="Ribulose-phoshate binding barrel"/>
    <property type="match status" value="1"/>
</dbReference>
<sequence length="234" mass="24994">MPDKPTKEKLMEQLKGGIIVSCQALPGEPLYSETGGIMPLMAKAAQEAGAVGIRANSVRDIKEIQAITDLPIIGIIKKDYPPQEPFITATMTEVDQLAALNIAVIAMDCTKRDRHDGLDIASFIRQVKEKYPNQLLMADISTFDEGLVAHQAGIDFVGTTLSGYTPYSRQEAGPDVALIEALCKAGIAVIAEGKIHSPEEAKKINDLGVAGIVVGGAITRPKEIAGRFIEALKS</sequence>
<gene>
    <name evidence="1" type="primary">nanE</name>
    <name type="ordered locus">M6_Spy0243</name>
</gene>
<protein>
    <recommendedName>
        <fullName evidence="1">Putative N-acetylmannosamine-6-phosphate 2-epimerase</fullName>
        <ecNumber evidence="1">5.1.3.9</ecNumber>
    </recommendedName>
    <alternativeName>
        <fullName evidence="1">ManNAc-6-P epimerase</fullName>
    </alternativeName>
</protein>
<evidence type="ECO:0000255" key="1">
    <source>
        <dbReference type="HAMAP-Rule" id="MF_01235"/>
    </source>
</evidence>